<feature type="chain" id="PRO_1000006830" description="Phenylalanine--tRNA ligase alpha subunit">
    <location>
        <begin position="1"/>
        <end position="337"/>
    </location>
</feature>
<feature type="binding site" evidence="1">
    <location>
        <position position="252"/>
    </location>
    <ligand>
        <name>Mg(2+)</name>
        <dbReference type="ChEBI" id="CHEBI:18420"/>
        <note>shared with beta subunit</note>
    </ligand>
</feature>
<comment type="catalytic activity">
    <reaction evidence="1">
        <text>tRNA(Phe) + L-phenylalanine + ATP = L-phenylalanyl-tRNA(Phe) + AMP + diphosphate + H(+)</text>
        <dbReference type="Rhea" id="RHEA:19413"/>
        <dbReference type="Rhea" id="RHEA-COMP:9668"/>
        <dbReference type="Rhea" id="RHEA-COMP:9699"/>
        <dbReference type="ChEBI" id="CHEBI:15378"/>
        <dbReference type="ChEBI" id="CHEBI:30616"/>
        <dbReference type="ChEBI" id="CHEBI:33019"/>
        <dbReference type="ChEBI" id="CHEBI:58095"/>
        <dbReference type="ChEBI" id="CHEBI:78442"/>
        <dbReference type="ChEBI" id="CHEBI:78531"/>
        <dbReference type="ChEBI" id="CHEBI:456215"/>
        <dbReference type="EC" id="6.1.1.20"/>
    </reaction>
</comment>
<comment type="cofactor">
    <cofactor evidence="1">
        <name>Mg(2+)</name>
        <dbReference type="ChEBI" id="CHEBI:18420"/>
    </cofactor>
    <text evidence="1">Binds 2 magnesium ions per tetramer.</text>
</comment>
<comment type="subunit">
    <text evidence="1">Tetramer of two alpha and two beta subunits.</text>
</comment>
<comment type="subcellular location">
    <subcellularLocation>
        <location evidence="1">Cytoplasm</location>
    </subcellularLocation>
</comment>
<comment type="similarity">
    <text evidence="1">Belongs to the class-II aminoacyl-tRNA synthetase family. Phe-tRNA synthetase alpha subunit type 1 subfamily.</text>
</comment>
<keyword id="KW-0030">Aminoacyl-tRNA synthetase</keyword>
<keyword id="KW-0067">ATP-binding</keyword>
<keyword id="KW-0963">Cytoplasm</keyword>
<keyword id="KW-0436">Ligase</keyword>
<keyword id="KW-0460">Magnesium</keyword>
<keyword id="KW-0479">Metal-binding</keyword>
<keyword id="KW-0547">Nucleotide-binding</keyword>
<keyword id="KW-0648">Protein biosynthesis</keyword>
<name>SYFA_FRAT1</name>
<proteinExistence type="inferred from homology"/>
<evidence type="ECO:0000255" key="1">
    <source>
        <dbReference type="HAMAP-Rule" id="MF_00281"/>
    </source>
</evidence>
<dbReference type="EC" id="6.1.1.20" evidence="1"/>
<dbReference type="EMBL" id="AM286280">
    <property type="protein sequence ID" value="CAL09019.1"/>
    <property type="molecule type" value="Genomic_DNA"/>
</dbReference>
<dbReference type="RefSeq" id="WP_003021092.1">
    <property type="nucleotide sequence ID" value="NC_008245.1"/>
</dbReference>
<dbReference type="SMR" id="Q14HK5"/>
<dbReference type="KEGG" id="ftf:FTF1003c"/>
<dbReference type="HOGENOM" id="CLU_025086_0_1_6"/>
<dbReference type="GO" id="GO:0005737">
    <property type="term" value="C:cytoplasm"/>
    <property type="evidence" value="ECO:0007669"/>
    <property type="project" value="UniProtKB-SubCell"/>
</dbReference>
<dbReference type="GO" id="GO:0005524">
    <property type="term" value="F:ATP binding"/>
    <property type="evidence" value="ECO:0007669"/>
    <property type="project" value="UniProtKB-UniRule"/>
</dbReference>
<dbReference type="GO" id="GO:0000287">
    <property type="term" value="F:magnesium ion binding"/>
    <property type="evidence" value="ECO:0007669"/>
    <property type="project" value="UniProtKB-UniRule"/>
</dbReference>
<dbReference type="GO" id="GO:0004826">
    <property type="term" value="F:phenylalanine-tRNA ligase activity"/>
    <property type="evidence" value="ECO:0007669"/>
    <property type="project" value="UniProtKB-UniRule"/>
</dbReference>
<dbReference type="GO" id="GO:0000049">
    <property type="term" value="F:tRNA binding"/>
    <property type="evidence" value="ECO:0007669"/>
    <property type="project" value="InterPro"/>
</dbReference>
<dbReference type="GO" id="GO:0006432">
    <property type="term" value="P:phenylalanyl-tRNA aminoacylation"/>
    <property type="evidence" value="ECO:0007669"/>
    <property type="project" value="UniProtKB-UniRule"/>
</dbReference>
<dbReference type="CDD" id="cd00496">
    <property type="entry name" value="PheRS_alpha_core"/>
    <property type="match status" value="1"/>
</dbReference>
<dbReference type="FunFam" id="3.30.930.10:FF:000003">
    <property type="entry name" value="Phenylalanine--tRNA ligase alpha subunit"/>
    <property type="match status" value="1"/>
</dbReference>
<dbReference type="Gene3D" id="3.30.930.10">
    <property type="entry name" value="Bira Bifunctional Protein, Domain 2"/>
    <property type="match status" value="1"/>
</dbReference>
<dbReference type="HAMAP" id="MF_00281">
    <property type="entry name" value="Phe_tRNA_synth_alpha1"/>
    <property type="match status" value="1"/>
</dbReference>
<dbReference type="InterPro" id="IPR006195">
    <property type="entry name" value="aa-tRNA-synth_II"/>
</dbReference>
<dbReference type="InterPro" id="IPR045864">
    <property type="entry name" value="aa-tRNA-synth_II/BPL/LPL"/>
</dbReference>
<dbReference type="InterPro" id="IPR004529">
    <property type="entry name" value="Phe-tRNA-synth_IIc_asu"/>
</dbReference>
<dbReference type="InterPro" id="IPR004188">
    <property type="entry name" value="Phe-tRNA_ligase_II_N"/>
</dbReference>
<dbReference type="InterPro" id="IPR022911">
    <property type="entry name" value="Phe_tRNA_ligase_alpha1_bac"/>
</dbReference>
<dbReference type="InterPro" id="IPR002319">
    <property type="entry name" value="Phenylalanyl-tRNA_Synthase"/>
</dbReference>
<dbReference type="InterPro" id="IPR010978">
    <property type="entry name" value="tRNA-bd_arm"/>
</dbReference>
<dbReference type="NCBIfam" id="TIGR00468">
    <property type="entry name" value="pheS"/>
    <property type="match status" value="1"/>
</dbReference>
<dbReference type="PANTHER" id="PTHR11538:SF41">
    <property type="entry name" value="PHENYLALANINE--TRNA LIGASE, MITOCHONDRIAL"/>
    <property type="match status" value="1"/>
</dbReference>
<dbReference type="PANTHER" id="PTHR11538">
    <property type="entry name" value="PHENYLALANYL-TRNA SYNTHETASE"/>
    <property type="match status" value="1"/>
</dbReference>
<dbReference type="Pfam" id="PF02912">
    <property type="entry name" value="Phe_tRNA-synt_N"/>
    <property type="match status" value="1"/>
</dbReference>
<dbReference type="Pfam" id="PF01409">
    <property type="entry name" value="tRNA-synt_2d"/>
    <property type="match status" value="1"/>
</dbReference>
<dbReference type="SUPFAM" id="SSF55681">
    <property type="entry name" value="Class II aaRS and biotin synthetases"/>
    <property type="match status" value="1"/>
</dbReference>
<dbReference type="SUPFAM" id="SSF46589">
    <property type="entry name" value="tRNA-binding arm"/>
    <property type="match status" value="1"/>
</dbReference>
<dbReference type="PROSITE" id="PS50862">
    <property type="entry name" value="AA_TRNA_LIGASE_II"/>
    <property type="match status" value="1"/>
</dbReference>
<accession>Q14HK5</accession>
<organism>
    <name type="scientific">Francisella tularensis subsp. tularensis (strain FSC 198)</name>
    <dbReference type="NCBI Taxonomy" id="393115"/>
    <lineage>
        <taxon>Bacteria</taxon>
        <taxon>Pseudomonadati</taxon>
        <taxon>Pseudomonadota</taxon>
        <taxon>Gammaproteobacteria</taxon>
        <taxon>Thiotrichales</taxon>
        <taxon>Francisellaceae</taxon>
        <taxon>Francisella</taxon>
    </lineage>
</organism>
<reference key="1">
    <citation type="journal article" date="2007" name="PLoS ONE">
        <title>Genome sequencing shows that European isolates of Francisella tularensis subspecies tularensis are almost identical to US laboratory strain Schu S4.</title>
        <authorList>
            <person name="Chaudhuri R.R."/>
            <person name="Ren C.-P."/>
            <person name="Desmond L."/>
            <person name="Vincent G.A."/>
            <person name="Silman N.J."/>
            <person name="Brehm J.K."/>
            <person name="Elmore M.J."/>
            <person name="Hudson M.J."/>
            <person name="Forsman M."/>
            <person name="Isherwood K.E."/>
            <person name="Gurycova D."/>
            <person name="Minton N.P."/>
            <person name="Titball R.W."/>
            <person name="Pallen M.J."/>
            <person name="Vipond R."/>
        </authorList>
    </citation>
    <scope>NUCLEOTIDE SEQUENCE [LARGE SCALE GENOMIC DNA]</scope>
    <source>
        <strain>FSC 198</strain>
    </source>
</reference>
<protein>
    <recommendedName>
        <fullName evidence="1">Phenylalanine--tRNA ligase alpha subunit</fullName>
        <ecNumber evidence="1">6.1.1.20</ecNumber>
    </recommendedName>
    <alternativeName>
        <fullName evidence="1">Phenylalanyl-tRNA synthetase alpha subunit</fullName>
        <shortName evidence="1">PheRS</shortName>
    </alternativeName>
</protein>
<sequence length="337" mass="38477">MQIVEQMKDKALAELNLVKDKKTLDDIRVKYLGKKGELTEMMKLIATLPNDEKPKLGQAVNIAKQALQEAINLKLANFEEQELNEKLAQEKIDITLSGVGQNQGSLHPVTKTLNRIEAFFKQNGFAIEFGPEIESDYYNFETLNIPSHHPARAMHDTFYIDETHVLRTHTSGVQIRTMEKQQPPIRIIAPGRVYRCDSDITHTPMFHQVEGLLVDKDVSFADLKGLLHAFLNSFFEKDLKVRFRPSYFPFTEPSAEADIECVMCDGKGCRVCKHTGWLEVLGCGMVHPKVLKAGNIDSEKYQGFAFGMGVERLSMLRYGIDDLRMFFENDLRFLKQF</sequence>
<gene>
    <name evidence="1" type="primary">pheS</name>
    <name type="ordered locus">FTF1003c</name>
</gene>